<dbReference type="EMBL" id="BX936398">
    <property type="protein sequence ID" value="CAH21262.1"/>
    <property type="molecule type" value="Genomic_DNA"/>
</dbReference>
<dbReference type="RefSeq" id="WP_011192403.1">
    <property type="nucleotide sequence ID" value="NC_006155.1"/>
</dbReference>
<dbReference type="SMR" id="Q66AV6"/>
<dbReference type="KEGG" id="yps:YPTB2024"/>
<dbReference type="Proteomes" id="UP000001011">
    <property type="component" value="Chromosome"/>
</dbReference>
<dbReference type="Gene3D" id="1.10.10.10">
    <property type="entry name" value="Winged helix-like DNA-binding domain superfamily/Winged helix DNA-binding domain"/>
    <property type="match status" value="2"/>
</dbReference>
<dbReference type="HAMAP" id="MF_01584">
    <property type="entry name" value="UPF0502"/>
    <property type="match status" value="1"/>
</dbReference>
<dbReference type="InterPro" id="IPR007432">
    <property type="entry name" value="DUF480"/>
</dbReference>
<dbReference type="InterPro" id="IPR036388">
    <property type="entry name" value="WH-like_DNA-bd_sf"/>
</dbReference>
<dbReference type="InterPro" id="IPR036390">
    <property type="entry name" value="WH_DNA-bd_sf"/>
</dbReference>
<dbReference type="NCBIfam" id="NF008413">
    <property type="entry name" value="PRK11239.1"/>
    <property type="match status" value="1"/>
</dbReference>
<dbReference type="PANTHER" id="PTHR38768">
    <property type="entry name" value="UPF0502 PROTEIN YCEH"/>
    <property type="match status" value="1"/>
</dbReference>
<dbReference type="PANTHER" id="PTHR38768:SF1">
    <property type="entry name" value="UPF0502 PROTEIN YCEH"/>
    <property type="match status" value="1"/>
</dbReference>
<dbReference type="Pfam" id="PF04337">
    <property type="entry name" value="DUF480"/>
    <property type="match status" value="1"/>
</dbReference>
<dbReference type="SUPFAM" id="SSF46785">
    <property type="entry name" value="Winged helix' DNA-binding domain"/>
    <property type="match status" value="2"/>
</dbReference>
<accession>Q66AV6</accession>
<reference key="1">
    <citation type="journal article" date="2004" name="Proc. Natl. Acad. Sci. U.S.A.">
        <title>Insights into the evolution of Yersinia pestis through whole-genome comparison with Yersinia pseudotuberculosis.</title>
        <authorList>
            <person name="Chain P.S.G."/>
            <person name="Carniel E."/>
            <person name="Larimer F.W."/>
            <person name="Lamerdin J."/>
            <person name="Stoutland P.O."/>
            <person name="Regala W.M."/>
            <person name="Georgescu A.M."/>
            <person name="Vergez L.M."/>
            <person name="Land M.L."/>
            <person name="Motin V.L."/>
            <person name="Brubaker R.R."/>
            <person name="Fowler J."/>
            <person name="Hinnebusch J."/>
            <person name="Marceau M."/>
            <person name="Medigue C."/>
            <person name="Simonet M."/>
            <person name="Chenal-Francisque V."/>
            <person name="Souza B."/>
            <person name="Dacheux D."/>
            <person name="Elliott J.M."/>
            <person name="Derbise A."/>
            <person name="Hauser L.J."/>
            <person name="Garcia E."/>
        </authorList>
    </citation>
    <scope>NUCLEOTIDE SEQUENCE [LARGE SCALE GENOMIC DNA]</scope>
    <source>
        <strain>IP32953</strain>
    </source>
</reference>
<proteinExistence type="inferred from homology"/>
<evidence type="ECO:0000255" key="1">
    <source>
        <dbReference type="HAMAP-Rule" id="MF_01584"/>
    </source>
</evidence>
<name>Y2024_YERPS</name>
<gene>
    <name type="ordered locus">YPTB2024</name>
</gene>
<sequence length="233" mass="26379">MKHNLNAHEARVIGCLLEKQVTTPEQYPMSLNGLTLACNQKTSRDPVMELSESQVQQTLDFLLKKHLIRSQSGNRVMKYEHRFCNSEFGDLKFSPAEVAVITLLLLRGAQTPGELRTRTNRMYEFADVAETEETLKTLSLREDGPFVVRLAREPGKRESRFMPLFSGDVASSLLAAGEAEENNHTLEANPRETHSFENIALEKTALEARVAQLEQQVIQLSRRLDDVLIQLDD</sequence>
<organism>
    <name type="scientific">Yersinia pseudotuberculosis serotype I (strain IP32953)</name>
    <dbReference type="NCBI Taxonomy" id="273123"/>
    <lineage>
        <taxon>Bacteria</taxon>
        <taxon>Pseudomonadati</taxon>
        <taxon>Pseudomonadota</taxon>
        <taxon>Gammaproteobacteria</taxon>
        <taxon>Enterobacterales</taxon>
        <taxon>Yersiniaceae</taxon>
        <taxon>Yersinia</taxon>
    </lineage>
</organism>
<comment type="similarity">
    <text evidence="1">Belongs to the UPF0502 family.</text>
</comment>
<protein>
    <recommendedName>
        <fullName evidence="1">UPF0502 protein YPTB2024</fullName>
    </recommendedName>
</protein>
<feature type="chain" id="PRO_0000309450" description="UPF0502 protein YPTB2024">
    <location>
        <begin position="1"/>
        <end position="233"/>
    </location>
</feature>